<organism>
    <name type="scientific">Shewanella woodyi (strain ATCC 51908 / MS32)</name>
    <dbReference type="NCBI Taxonomy" id="392500"/>
    <lineage>
        <taxon>Bacteria</taxon>
        <taxon>Pseudomonadati</taxon>
        <taxon>Pseudomonadota</taxon>
        <taxon>Gammaproteobacteria</taxon>
        <taxon>Alteromonadales</taxon>
        <taxon>Shewanellaceae</taxon>
        <taxon>Shewanella</taxon>
    </lineage>
</organism>
<gene>
    <name evidence="1" type="primary">tsaC</name>
    <name type="synonym">rimN</name>
    <name type="ordered locus">Swoo_0044</name>
</gene>
<name>TSAC_SHEWM</name>
<sequence length="185" mass="20101">MLEQAPAEVKQVIESGGVVAYPTEAVYGLGCDPDNDAAITKLLAIKKRPWEKGLILVASDYQQLLPYIDDSQLTEEQRERVFSKWPGPFTFIMPIKPGISNLLCGSFNSLAVRVSDHPTIQAICQQLGKPLVSTSANHSGEEPAMSHEEILAKFEGEIDALVAGSLGEQRKPSTIIDAISGKILR</sequence>
<evidence type="ECO:0000255" key="1">
    <source>
        <dbReference type="HAMAP-Rule" id="MF_01852"/>
    </source>
</evidence>
<keyword id="KW-0067">ATP-binding</keyword>
<keyword id="KW-0963">Cytoplasm</keyword>
<keyword id="KW-0547">Nucleotide-binding</keyword>
<keyword id="KW-0548">Nucleotidyltransferase</keyword>
<keyword id="KW-1185">Reference proteome</keyword>
<keyword id="KW-0808">Transferase</keyword>
<keyword id="KW-0819">tRNA processing</keyword>
<proteinExistence type="inferred from homology"/>
<protein>
    <recommendedName>
        <fullName evidence="1">Threonylcarbamoyl-AMP synthase</fullName>
        <shortName evidence="1">TC-AMP synthase</shortName>
        <ecNumber evidence="1">2.7.7.87</ecNumber>
    </recommendedName>
    <alternativeName>
        <fullName evidence="1">L-threonylcarbamoyladenylate synthase</fullName>
    </alternativeName>
    <alternativeName>
        <fullName evidence="1">t(6)A37 threonylcarbamoyladenosine biosynthesis protein TsaC</fullName>
    </alternativeName>
    <alternativeName>
        <fullName evidence="1">tRNA threonylcarbamoyladenosine biosynthesis protein TsaC</fullName>
    </alternativeName>
</protein>
<dbReference type="EC" id="2.7.7.87" evidence="1"/>
<dbReference type="EMBL" id="CP000961">
    <property type="protein sequence ID" value="ACA84345.1"/>
    <property type="molecule type" value="Genomic_DNA"/>
</dbReference>
<dbReference type="RefSeq" id="WP_012322694.1">
    <property type="nucleotide sequence ID" value="NC_010506.1"/>
</dbReference>
<dbReference type="SMR" id="B1KCX0"/>
<dbReference type="STRING" id="392500.Swoo_0044"/>
<dbReference type="KEGG" id="swd:Swoo_0044"/>
<dbReference type="eggNOG" id="COG0009">
    <property type="taxonomic scope" value="Bacteria"/>
</dbReference>
<dbReference type="HOGENOM" id="CLU_031397_6_0_6"/>
<dbReference type="Proteomes" id="UP000002168">
    <property type="component" value="Chromosome"/>
</dbReference>
<dbReference type="GO" id="GO:0005737">
    <property type="term" value="C:cytoplasm"/>
    <property type="evidence" value="ECO:0007669"/>
    <property type="project" value="UniProtKB-SubCell"/>
</dbReference>
<dbReference type="GO" id="GO:0005524">
    <property type="term" value="F:ATP binding"/>
    <property type="evidence" value="ECO:0007669"/>
    <property type="project" value="UniProtKB-UniRule"/>
</dbReference>
<dbReference type="GO" id="GO:0003725">
    <property type="term" value="F:double-stranded RNA binding"/>
    <property type="evidence" value="ECO:0007669"/>
    <property type="project" value="InterPro"/>
</dbReference>
<dbReference type="GO" id="GO:0061710">
    <property type="term" value="F:L-threonylcarbamoyladenylate synthase"/>
    <property type="evidence" value="ECO:0007669"/>
    <property type="project" value="UniProtKB-EC"/>
</dbReference>
<dbReference type="GO" id="GO:0000049">
    <property type="term" value="F:tRNA binding"/>
    <property type="evidence" value="ECO:0007669"/>
    <property type="project" value="TreeGrafter"/>
</dbReference>
<dbReference type="GO" id="GO:0006450">
    <property type="term" value="P:regulation of translational fidelity"/>
    <property type="evidence" value="ECO:0007669"/>
    <property type="project" value="TreeGrafter"/>
</dbReference>
<dbReference type="GO" id="GO:0002949">
    <property type="term" value="P:tRNA threonylcarbamoyladenosine modification"/>
    <property type="evidence" value="ECO:0007669"/>
    <property type="project" value="UniProtKB-UniRule"/>
</dbReference>
<dbReference type="FunFam" id="3.90.870.10:FF:000004">
    <property type="entry name" value="Threonylcarbamoyl-AMP synthase"/>
    <property type="match status" value="1"/>
</dbReference>
<dbReference type="Gene3D" id="3.90.870.10">
    <property type="entry name" value="DHBP synthase"/>
    <property type="match status" value="1"/>
</dbReference>
<dbReference type="HAMAP" id="MF_01852">
    <property type="entry name" value="TsaC"/>
    <property type="match status" value="1"/>
</dbReference>
<dbReference type="InterPro" id="IPR017945">
    <property type="entry name" value="DHBP_synth_RibB-like_a/b_dom"/>
</dbReference>
<dbReference type="InterPro" id="IPR006070">
    <property type="entry name" value="Sua5-like_dom"/>
</dbReference>
<dbReference type="InterPro" id="IPR023535">
    <property type="entry name" value="TC-AMP_synthase"/>
</dbReference>
<dbReference type="InterPro" id="IPR050156">
    <property type="entry name" value="TC-AMP_synthase_SUA5"/>
</dbReference>
<dbReference type="NCBIfam" id="TIGR00057">
    <property type="entry name" value="L-threonylcarbamoyladenylate synthase"/>
    <property type="match status" value="1"/>
</dbReference>
<dbReference type="PANTHER" id="PTHR17490">
    <property type="entry name" value="SUA5"/>
    <property type="match status" value="1"/>
</dbReference>
<dbReference type="PANTHER" id="PTHR17490:SF18">
    <property type="entry name" value="THREONYLCARBAMOYL-AMP SYNTHASE"/>
    <property type="match status" value="1"/>
</dbReference>
<dbReference type="Pfam" id="PF01300">
    <property type="entry name" value="Sua5_yciO_yrdC"/>
    <property type="match status" value="1"/>
</dbReference>
<dbReference type="SUPFAM" id="SSF55821">
    <property type="entry name" value="YrdC/RibB"/>
    <property type="match status" value="1"/>
</dbReference>
<dbReference type="PROSITE" id="PS51163">
    <property type="entry name" value="YRDC"/>
    <property type="match status" value="1"/>
</dbReference>
<comment type="function">
    <text evidence="1">Required for the formation of a threonylcarbamoyl group on adenosine at position 37 (t(6)A37) in tRNAs that read codons beginning with adenine. Catalyzes the conversion of L-threonine, HCO(3)(-)/CO(2) and ATP to give threonylcarbamoyl-AMP (TC-AMP) as the acyladenylate intermediate, with the release of diphosphate.</text>
</comment>
<comment type="catalytic activity">
    <reaction evidence="1">
        <text>L-threonine + hydrogencarbonate + ATP = L-threonylcarbamoyladenylate + diphosphate + H2O</text>
        <dbReference type="Rhea" id="RHEA:36407"/>
        <dbReference type="ChEBI" id="CHEBI:15377"/>
        <dbReference type="ChEBI" id="CHEBI:17544"/>
        <dbReference type="ChEBI" id="CHEBI:30616"/>
        <dbReference type="ChEBI" id="CHEBI:33019"/>
        <dbReference type="ChEBI" id="CHEBI:57926"/>
        <dbReference type="ChEBI" id="CHEBI:73682"/>
        <dbReference type="EC" id="2.7.7.87"/>
    </reaction>
</comment>
<comment type="subcellular location">
    <subcellularLocation>
        <location evidence="1">Cytoplasm</location>
    </subcellularLocation>
</comment>
<comment type="similarity">
    <text evidence="1">Belongs to the SUA5 family. TsaC subfamily.</text>
</comment>
<reference key="1">
    <citation type="submission" date="2008-02" db="EMBL/GenBank/DDBJ databases">
        <title>Complete sequence of Shewanella woodyi ATCC 51908.</title>
        <authorList>
            <consortium name="US DOE Joint Genome Institute"/>
            <person name="Copeland A."/>
            <person name="Lucas S."/>
            <person name="Lapidus A."/>
            <person name="Glavina del Rio T."/>
            <person name="Dalin E."/>
            <person name="Tice H."/>
            <person name="Bruce D."/>
            <person name="Goodwin L."/>
            <person name="Pitluck S."/>
            <person name="Sims D."/>
            <person name="Brettin T."/>
            <person name="Detter J.C."/>
            <person name="Han C."/>
            <person name="Kuske C.R."/>
            <person name="Schmutz J."/>
            <person name="Larimer F."/>
            <person name="Land M."/>
            <person name="Hauser L."/>
            <person name="Kyrpides N."/>
            <person name="Lykidis A."/>
            <person name="Zhao J.-S."/>
            <person name="Richardson P."/>
        </authorList>
    </citation>
    <scope>NUCLEOTIDE SEQUENCE [LARGE SCALE GENOMIC DNA]</scope>
    <source>
        <strain>ATCC 51908 / MS32</strain>
    </source>
</reference>
<feature type="chain" id="PRO_0000352990" description="Threonylcarbamoyl-AMP synthase">
    <location>
        <begin position="1"/>
        <end position="185"/>
    </location>
</feature>
<feature type="domain" description="YrdC-like" evidence="1">
    <location>
        <begin position="3"/>
        <end position="185"/>
    </location>
</feature>
<accession>B1KCX0</accession>